<gene>
    <name evidence="1" type="primary">aroE</name>
    <name type="ordered locus">VCM66_0056</name>
</gene>
<proteinExistence type="inferred from homology"/>
<reference key="1">
    <citation type="journal article" date="2008" name="PLoS ONE">
        <title>A recalibrated molecular clock and independent origins for the cholera pandemic clones.</title>
        <authorList>
            <person name="Feng L."/>
            <person name="Reeves P.R."/>
            <person name="Lan R."/>
            <person name="Ren Y."/>
            <person name="Gao C."/>
            <person name="Zhou Z."/>
            <person name="Ren Y."/>
            <person name="Cheng J."/>
            <person name="Wang W."/>
            <person name="Wang J."/>
            <person name="Qian W."/>
            <person name="Li D."/>
            <person name="Wang L."/>
        </authorList>
    </citation>
    <scope>NUCLEOTIDE SEQUENCE [LARGE SCALE GENOMIC DNA]</scope>
    <source>
        <strain>M66-2</strain>
    </source>
</reference>
<keyword id="KW-0028">Amino-acid biosynthesis</keyword>
<keyword id="KW-0057">Aromatic amino acid biosynthesis</keyword>
<keyword id="KW-0521">NADP</keyword>
<keyword id="KW-0560">Oxidoreductase</keyword>
<accession>C3LPC9</accession>
<comment type="function">
    <text evidence="1">Involved in the biosynthesis of the chorismate, which leads to the biosynthesis of aromatic amino acids. Catalyzes the reversible NADPH linked reduction of 3-dehydroshikimate (DHSA) to yield shikimate (SA).</text>
</comment>
<comment type="catalytic activity">
    <reaction evidence="1">
        <text>shikimate + NADP(+) = 3-dehydroshikimate + NADPH + H(+)</text>
        <dbReference type="Rhea" id="RHEA:17737"/>
        <dbReference type="ChEBI" id="CHEBI:15378"/>
        <dbReference type="ChEBI" id="CHEBI:16630"/>
        <dbReference type="ChEBI" id="CHEBI:36208"/>
        <dbReference type="ChEBI" id="CHEBI:57783"/>
        <dbReference type="ChEBI" id="CHEBI:58349"/>
        <dbReference type="EC" id="1.1.1.25"/>
    </reaction>
</comment>
<comment type="pathway">
    <text evidence="1">Metabolic intermediate biosynthesis; chorismate biosynthesis; chorismate from D-erythrose 4-phosphate and phosphoenolpyruvate: step 4/7.</text>
</comment>
<comment type="subunit">
    <text evidence="1">Homodimer.</text>
</comment>
<comment type="similarity">
    <text evidence="1">Belongs to the shikimate dehydrogenase family.</text>
</comment>
<protein>
    <recommendedName>
        <fullName evidence="1">Shikimate dehydrogenase (NADP(+))</fullName>
        <shortName evidence="1">SDH</shortName>
        <ecNumber evidence="1">1.1.1.25</ecNumber>
    </recommendedName>
</protein>
<sequence length="278" mass="30250">MASQIDQYAVFGNPINHSKSPFIHTLFARQTQQSMIYTAQCVPVDGFTEAAKHFFAQGGRGCNVTVPFKEEAYRFADRLTERARLAGAVNTLKKLDDGEILGDNTDGEGLVQDLLAQQVLLKGATILLIGAGGAARGVLKPLLDQQPASITVTNRTFAKAEQLAELVAAYGEVKAQAFEQLKQSYDVIINSTSASLDGELPAIDPVIFSSRSVCYDMMYGKGYTVFNQWARQHGCAQAIDGLGMLVGQAAESFMLWRGLRPGTKQILRELRKNLEGAL</sequence>
<dbReference type="EC" id="1.1.1.25" evidence="1"/>
<dbReference type="EMBL" id="CP001233">
    <property type="protein sequence ID" value="ACP04393.1"/>
    <property type="molecule type" value="Genomic_DNA"/>
</dbReference>
<dbReference type="RefSeq" id="WP_000168154.1">
    <property type="nucleotide sequence ID" value="NC_012578.1"/>
</dbReference>
<dbReference type="SMR" id="C3LPC9"/>
<dbReference type="KEGG" id="vcm:VCM66_0056"/>
<dbReference type="HOGENOM" id="CLU_044063_2_1_6"/>
<dbReference type="UniPathway" id="UPA00053">
    <property type="reaction ID" value="UER00087"/>
</dbReference>
<dbReference type="Proteomes" id="UP000001217">
    <property type="component" value="Chromosome I"/>
</dbReference>
<dbReference type="GO" id="GO:0005829">
    <property type="term" value="C:cytosol"/>
    <property type="evidence" value="ECO:0007669"/>
    <property type="project" value="TreeGrafter"/>
</dbReference>
<dbReference type="GO" id="GO:0050661">
    <property type="term" value="F:NADP binding"/>
    <property type="evidence" value="ECO:0007669"/>
    <property type="project" value="InterPro"/>
</dbReference>
<dbReference type="GO" id="GO:0004764">
    <property type="term" value="F:shikimate 3-dehydrogenase (NADP+) activity"/>
    <property type="evidence" value="ECO:0007669"/>
    <property type="project" value="UniProtKB-UniRule"/>
</dbReference>
<dbReference type="GO" id="GO:0008652">
    <property type="term" value="P:amino acid biosynthetic process"/>
    <property type="evidence" value="ECO:0007669"/>
    <property type="project" value="UniProtKB-KW"/>
</dbReference>
<dbReference type="GO" id="GO:0009073">
    <property type="term" value="P:aromatic amino acid family biosynthetic process"/>
    <property type="evidence" value="ECO:0007669"/>
    <property type="project" value="UniProtKB-KW"/>
</dbReference>
<dbReference type="GO" id="GO:0009423">
    <property type="term" value="P:chorismate biosynthetic process"/>
    <property type="evidence" value="ECO:0007669"/>
    <property type="project" value="UniProtKB-UniRule"/>
</dbReference>
<dbReference type="GO" id="GO:0019632">
    <property type="term" value="P:shikimate metabolic process"/>
    <property type="evidence" value="ECO:0007669"/>
    <property type="project" value="InterPro"/>
</dbReference>
<dbReference type="CDD" id="cd01065">
    <property type="entry name" value="NAD_bind_Shikimate_DH"/>
    <property type="match status" value="1"/>
</dbReference>
<dbReference type="FunFam" id="3.40.50.10860:FF:000006">
    <property type="entry name" value="Shikimate dehydrogenase (NADP(+))"/>
    <property type="match status" value="1"/>
</dbReference>
<dbReference type="FunFam" id="3.40.50.720:FF:000104">
    <property type="entry name" value="Shikimate dehydrogenase (NADP(+))"/>
    <property type="match status" value="1"/>
</dbReference>
<dbReference type="Gene3D" id="3.40.50.10860">
    <property type="entry name" value="Leucine Dehydrogenase, chain A, domain 1"/>
    <property type="match status" value="1"/>
</dbReference>
<dbReference type="Gene3D" id="3.40.50.720">
    <property type="entry name" value="NAD(P)-binding Rossmann-like Domain"/>
    <property type="match status" value="1"/>
</dbReference>
<dbReference type="HAMAP" id="MF_00222">
    <property type="entry name" value="Shikimate_DH_AroE"/>
    <property type="match status" value="1"/>
</dbReference>
<dbReference type="InterPro" id="IPR046346">
    <property type="entry name" value="Aminoacid_DH-like_N_sf"/>
</dbReference>
<dbReference type="InterPro" id="IPR036291">
    <property type="entry name" value="NAD(P)-bd_dom_sf"/>
</dbReference>
<dbReference type="InterPro" id="IPR041121">
    <property type="entry name" value="SDH_C"/>
</dbReference>
<dbReference type="InterPro" id="IPR011342">
    <property type="entry name" value="Shikimate_DH"/>
</dbReference>
<dbReference type="InterPro" id="IPR013708">
    <property type="entry name" value="Shikimate_DH-bd_N"/>
</dbReference>
<dbReference type="InterPro" id="IPR022893">
    <property type="entry name" value="Shikimate_DH_fam"/>
</dbReference>
<dbReference type="InterPro" id="IPR006151">
    <property type="entry name" value="Shikm_DH/Glu-tRNA_Rdtase"/>
</dbReference>
<dbReference type="NCBIfam" id="TIGR00507">
    <property type="entry name" value="aroE"/>
    <property type="match status" value="1"/>
</dbReference>
<dbReference type="NCBIfam" id="NF001310">
    <property type="entry name" value="PRK00258.1-2"/>
    <property type="match status" value="1"/>
</dbReference>
<dbReference type="PANTHER" id="PTHR21089:SF1">
    <property type="entry name" value="BIFUNCTIONAL 3-DEHYDROQUINATE DEHYDRATASE_SHIKIMATE DEHYDROGENASE, CHLOROPLASTIC"/>
    <property type="match status" value="1"/>
</dbReference>
<dbReference type="PANTHER" id="PTHR21089">
    <property type="entry name" value="SHIKIMATE DEHYDROGENASE"/>
    <property type="match status" value="1"/>
</dbReference>
<dbReference type="Pfam" id="PF18317">
    <property type="entry name" value="SDH_C"/>
    <property type="match status" value="1"/>
</dbReference>
<dbReference type="Pfam" id="PF01488">
    <property type="entry name" value="Shikimate_DH"/>
    <property type="match status" value="1"/>
</dbReference>
<dbReference type="Pfam" id="PF08501">
    <property type="entry name" value="Shikimate_dh_N"/>
    <property type="match status" value="1"/>
</dbReference>
<dbReference type="SUPFAM" id="SSF53223">
    <property type="entry name" value="Aminoacid dehydrogenase-like, N-terminal domain"/>
    <property type="match status" value="1"/>
</dbReference>
<dbReference type="SUPFAM" id="SSF51735">
    <property type="entry name" value="NAD(P)-binding Rossmann-fold domains"/>
    <property type="match status" value="1"/>
</dbReference>
<organism>
    <name type="scientific">Vibrio cholerae serotype O1 (strain M66-2)</name>
    <dbReference type="NCBI Taxonomy" id="579112"/>
    <lineage>
        <taxon>Bacteria</taxon>
        <taxon>Pseudomonadati</taxon>
        <taxon>Pseudomonadota</taxon>
        <taxon>Gammaproteobacteria</taxon>
        <taxon>Vibrionales</taxon>
        <taxon>Vibrionaceae</taxon>
        <taxon>Vibrio</taxon>
    </lineage>
</organism>
<evidence type="ECO:0000255" key="1">
    <source>
        <dbReference type="HAMAP-Rule" id="MF_00222"/>
    </source>
</evidence>
<feature type="chain" id="PRO_1000124903" description="Shikimate dehydrogenase (NADP(+))">
    <location>
        <begin position="1"/>
        <end position="278"/>
    </location>
</feature>
<feature type="active site" description="Proton acceptor" evidence="1">
    <location>
        <position position="69"/>
    </location>
</feature>
<feature type="binding site" evidence="1">
    <location>
        <begin position="18"/>
        <end position="20"/>
    </location>
    <ligand>
        <name>shikimate</name>
        <dbReference type="ChEBI" id="CHEBI:36208"/>
    </ligand>
</feature>
<feature type="binding site" evidence="1">
    <location>
        <position position="65"/>
    </location>
    <ligand>
        <name>shikimate</name>
        <dbReference type="ChEBI" id="CHEBI:36208"/>
    </ligand>
</feature>
<feature type="binding site" evidence="1">
    <location>
        <position position="81"/>
    </location>
    <ligand>
        <name>NADP(+)</name>
        <dbReference type="ChEBI" id="CHEBI:58349"/>
    </ligand>
</feature>
<feature type="binding site" evidence="1">
    <location>
        <position position="90"/>
    </location>
    <ligand>
        <name>shikimate</name>
        <dbReference type="ChEBI" id="CHEBI:36208"/>
    </ligand>
</feature>
<feature type="binding site" evidence="1">
    <location>
        <position position="106"/>
    </location>
    <ligand>
        <name>shikimate</name>
        <dbReference type="ChEBI" id="CHEBI:36208"/>
    </ligand>
</feature>
<feature type="binding site" evidence="1">
    <location>
        <begin position="130"/>
        <end position="134"/>
    </location>
    <ligand>
        <name>NADP(+)</name>
        <dbReference type="ChEBI" id="CHEBI:58349"/>
    </ligand>
</feature>
<feature type="binding site" evidence="1">
    <location>
        <begin position="154"/>
        <end position="159"/>
    </location>
    <ligand>
        <name>NADP(+)</name>
        <dbReference type="ChEBI" id="CHEBI:58349"/>
    </ligand>
</feature>
<feature type="binding site" evidence="1">
    <location>
        <position position="223"/>
    </location>
    <ligand>
        <name>shikimate</name>
        <dbReference type="ChEBI" id="CHEBI:36208"/>
    </ligand>
</feature>
<feature type="binding site" evidence="1">
    <location>
        <position position="241"/>
    </location>
    <ligand>
        <name>NADP(+)</name>
        <dbReference type="ChEBI" id="CHEBI:58349"/>
    </ligand>
</feature>
<name>AROE_VIBCM</name>